<name>EFC11_DANRE</name>
<protein>
    <recommendedName>
        <fullName>EF-hand calcium-binding domain-containing protein 11</fullName>
    </recommendedName>
</protein>
<organism>
    <name type="scientific">Danio rerio</name>
    <name type="common">Zebrafish</name>
    <name type="synonym">Brachydanio rerio</name>
    <dbReference type="NCBI Taxonomy" id="7955"/>
    <lineage>
        <taxon>Eukaryota</taxon>
        <taxon>Metazoa</taxon>
        <taxon>Chordata</taxon>
        <taxon>Craniata</taxon>
        <taxon>Vertebrata</taxon>
        <taxon>Euteleostomi</taxon>
        <taxon>Actinopterygii</taxon>
        <taxon>Neopterygii</taxon>
        <taxon>Teleostei</taxon>
        <taxon>Ostariophysi</taxon>
        <taxon>Cypriniformes</taxon>
        <taxon>Danionidae</taxon>
        <taxon>Danioninae</taxon>
        <taxon>Danio</taxon>
    </lineage>
</organism>
<dbReference type="EMBL" id="BC092868">
    <property type="protein sequence ID" value="AAH92868.1"/>
    <property type="molecule type" value="mRNA"/>
</dbReference>
<dbReference type="RefSeq" id="NP_001017812.1">
    <property type="nucleotide sequence ID" value="NM_001017812.1"/>
</dbReference>
<dbReference type="SMR" id="Q568G4"/>
<dbReference type="FunCoup" id="Q568G4">
    <property type="interactions" value="20"/>
</dbReference>
<dbReference type="STRING" id="7955.ENSDARP00000064232"/>
<dbReference type="PaxDb" id="7955-ENSDARP00000064232"/>
<dbReference type="GeneID" id="550510"/>
<dbReference type="KEGG" id="dre:550510"/>
<dbReference type="AGR" id="ZFIN:ZDB-GENE-050417-348"/>
<dbReference type="CTD" id="90141"/>
<dbReference type="ZFIN" id="ZDB-GENE-050417-348">
    <property type="gene designation" value="efcab11"/>
</dbReference>
<dbReference type="eggNOG" id="KOG0027">
    <property type="taxonomic scope" value="Eukaryota"/>
</dbReference>
<dbReference type="InParanoid" id="Q568G4"/>
<dbReference type="OrthoDB" id="26525at2759"/>
<dbReference type="PhylomeDB" id="Q568G4"/>
<dbReference type="PRO" id="PR:Q568G4"/>
<dbReference type="Proteomes" id="UP000000437">
    <property type="component" value="Chromosome 17"/>
</dbReference>
<dbReference type="GO" id="GO:0005737">
    <property type="term" value="C:cytoplasm"/>
    <property type="evidence" value="ECO:0000318"/>
    <property type="project" value="GO_Central"/>
</dbReference>
<dbReference type="GO" id="GO:0005509">
    <property type="term" value="F:calcium ion binding"/>
    <property type="evidence" value="ECO:0000318"/>
    <property type="project" value="GO_Central"/>
</dbReference>
<dbReference type="GO" id="GO:0030234">
    <property type="term" value="F:enzyme regulator activity"/>
    <property type="evidence" value="ECO:0000318"/>
    <property type="project" value="GO_Central"/>
</dbReference>
<dbReference type="GO" id="GO:0000226">
    <property type="term" value="P:microtubule cytoskeleton organization"/>
    <property type="evidence" value="ECO:0000318"/>
    <property type="project" value="GO_Central"/>
</dbReference>
<dbReference type="CDD" id="cd00051">
    <property type="entry name" value="EFh"/>
    <property type="match status" value="1"/>
</dbReference>
<dbReference type="FunFam" id="1.10.238.10:FF:000003">
    <property type="entry name" value="Calmodulin A"/>
    <property type="match status" value="1"/>
</dbReference>
<dbReference type="Gene3D" id="1.10.238.10">
    <property type="entry name" value="EF-hand"/>
    <property type="match status" value="1"/>
</dbReference>
<dbReference type="InterPro" id="IPR011992">
    <property type="entry name" value="EF-hand-dom_pair"/>
</dbReference>
<dbReference type="InterPro" id="IPR018247">
    <property type="entry name" value="EF_Hand_1_Ca_BS"/>
</dbReference>
<dbReference type="InterPro" id="IPR002048">
    <property type="entry name" value="EF_hand_dom"/>
</dbReference>
<dbReference type="InterPro" id="IPR050403">
    <property type="entry name" value="Myosin_RLC"/>
</dbReference>
<dbReference type="PANTHER" id="PTHR23049">
    <property type="entry name" value="MYOSIN REGULATORY LIGHT CHAIN 2"/>
    <property type="match status" value="1"/>
</dbReference>
<dbReference type="Pfam" id="PF13499">
    <property type="entry name" value="EF-hand_7"/>
    <property type="match status" value="1"/>
</dbReference>
<dbReference type="SMART" id="SM00054">
    <property type="entry name" value="EFh"/>
    <property type="match status" value="3"/>
</dbReference>
<dbReference type="SUPFAM" id="SSF47473">
    <property type="entry name" value="EF-hand"/>
    <property type="match status" value="1"/>
</dbReference>
<dbReference type="PROSITE" id="PS00018">
    <property type="entry name" value="EF_HAND_1"/>
    <property type="match status" value="1"/>
</dbReference>
<dbReference type="PROSITE" id="PS50222">
    <property type="entry name" value="EF_HAND_2"/>
    <property type="match status" value="3"/>
</dbReference>
<evidence type="ECO:0000255" key="1">
    <source>
        <dbReference type="PROSITE-ProRule" id="PRU00448"/>
    </source>
</evidence>
<reference key="1">
    <citation type="submission" date="2005-04" db="EMBL/GenBank/DDBJ databases">
        <authorList>
            <consortium name="NIH - Zebrafish Gene Collection (ZGC) project"/>
        </authorList>
    </citation>
    <scope>NUCLEOTIDE SEQUENCE [LARGE SCALE MRNA]</scope>
    <source>
        <tissue>Olfactory epithelium</tissue>
    </source>
</reference>
<accession>Q568G4</accession>
<keyword id="KW-0106">Calcium</keyword>
<keyword id="KW-0479">Metal-binding</keyword>
<keyword id="KW-1185">Reference proteome</keyword>
<keyword id="KW-0677">Repeat</keyword>
<gene>
    <name type="primary">efcab11</name>
    <name type="ORF">zgc:110317</name>
</gene>
<proteinExistence type="evidence at transcript level"/>
<feature type="chain" id="PRO_0000286583" description="EF-hand calcium-binding domain-containing protein 11">
    <location>
        <begin position="1"/>
        <end position="167"/>
    </location>
</feature>
<feature type="domain" description="EF-hand 1" evidence="1">
    <location>
        <begin position="17"/>
        <end position="52"/>
    </location>
</feature>
<feature type="domain" description="EF-hand 2" evidence="1">
    <location>
        <begin position="91"/>
        <end position="126"/>
    </location>
</feature>
<feature type="domain" description="EF-hand 3" evidence="1">
    <location>
        <begin position="127"/>
        <end position="162"/>
    </location>
</feature>
<feature type="binding site" evidence="1">
    <location>
        <position position="140"/>
    </location>
    <ligand>
        <name>Ca(2+)</name>
        <dbReference type="ChEBI" id="CHEBI:29108"/>
    </ligand>
</feature>
<feature type="binding site" evidence="1">
    <location>
        <position position="142"/>
    </location>
    <ligand>
        <name>Ca(2+)</name>
        <dbReference type="ChEBI" id="CHEBI:29108"/>
    </ligand>
</feature>
<feature type="binding site" evidence="1">
    <location>
        <position position="144"/>
    </location>
    <ligand>
        <name>Ca(2+)</name>
        <dbReference type="ChEBI" id="CHEBI:29108"/>
    </ligand>
</feature>
<feature type="binding site" evidence="1">
    <location>
        <position position="146"/>
    </location>
    <ligand>
        <name>Ca(2+)</name>
        <dbReference type="ChEBI" id="CHEBI:29108"/>
    </ligand>
</feature>
<feature type="binding site" evidence="1">
    <location>
        <position position="151"/>
    </location>
    <ligand>
        <name>Ca(2+)</name>
        <dbReference type="ChEBI" id="CHEBI:29108"/>
    </ligand>
</feature>
<sequence>MLTTGRSFRNERQINDAERKKIELVFHQCDVDKKGYMSREDLKIAVVMLFGYKPSKSETNILMENGTIRDCKGVPLEPFATLMRRKMSAEDPYEKARQIFSAFDVHCRGFLKLDDFKSAFKRVAPRLQERTVLEAFRHADQDSDGHISFKDFENIISYGLANTCTST</sequence>